<organism>
    <name type="scientific">Bacillus cereus (strain B4264)</name>
    <dbReference type="NCBI Taxonomy" id="405532"/>
    <lineage>
        <taxon>Bacteria</taxon>
        <taxon>Bacillati</taxon>
        <taxon>Bacillota</taxon>
        <taxon>Bacilli</taxon>
        <taxon>Bacillales</taxon>
        <taxon>Bacillaceae</taxon>
        <taxon>Bacillus</taxon>
        <taxon>Bacillus cereus group</taxon>
    </lineage>
</organism>
<reference key="1">
    <citation type="submission" date="2008-10" db="EMBL/GenBank/DDBJ databases">
        <title>Genome sequence of Bacillus cereus B4264.</title>
        <authorList>
            <person name="Dodson R.J."/>
            <person name="Durkin A.S."/>
            <person name="Rosovitz M.J."/>
            <person name="Rasko D.A."/>
            <person name="Hoffmaster A."/>
            <person name="Ravel J."/>
            <person name="Sutton G."/>
        </authorList>
    </citation>
    <scope>NUCLEOTIDE SEQUENCE [LARGE SCALE GENOMIC DNA]</scope>
    <source>
        <strain>B4264</strain>
    </source>
</reference>
<evidence type="ECO:0000255" key="1">
    <source>
        <dbReference type="HAMAP-Rule" id="MF_00639"/>
    </source>
</evidence>
<proteinExistence type="inferred from homology"/>
<gene>
    <name evidence="1" type="primary">murD</name>
    <name type="ordered locus">BCB4264_A4013</name>
</gene>
<dbReference type="EC" id="6.3.2.9" evidence="1"/>
<dbReference type="EMBL" id="CP001176">
    <property type="protein sequence ID" value="ACK60624.1"/>
    <property type="molecule type" value="Genomic_DNA"/>
</dbReference>
<dbReference type="RefSeq" id="WP_000860116.1">
    <property type="nucleotide sequence ID" value="NZ_VEHB01000002.1"/>
</dbReference>
<dbReference type="SMR" id="B7H6P8"/>
<dbReference type="KEGG" id="bcb:BCB4264_A4013"/>
<dbReference type="HOGENOM" id="CLU_032540_0_1_9"/>
<dbReference type="UniPathway" id="UPA00219"/>
<dbReference type="Proteomes" id="UP000007096">
    <property type="component" value="Chromosome"/>
</dbReference>
<dbReference type="GO" id="GO:0005737">
    <property type="term" value="C:cytoplasm"/>
    <property type="evidence" value="ECO:0007669"/>
    <property type="project" value="UniProtKB-SubCell"/>
</dbReference>
<dbReference type="GO" id="GO:0005524">
    <property type="term" value="F:ATP binding"/>
    <property type="evidence" value="ECO:0007669"/>
    <property type="project" value="UniProtKB-UniRule"/>
</dbReference>
<dbReference type="GO" id="GO:0008764">
    <property type="term" value="F:UDP-N-acetylmuramoylalanine-D-glutamate ligase activity"/>
    <property type="evidence" value="ECO:0007669"/>
    <property type="project" value="UniProtKB-UniRule"/>
</dbReference>
<dbReference type="GO" id="GO:0051301">
    <property type="term" value="P:cell division"/>
    <property type="evidence" value="ECO:0007669"/>
    <property type="project" value="UniProtKB-KW"/>
</dbReference>
<dbReference type="GO" id="GO:0071555">
    <property type="term" value="P:cell wall organization"/>
    <property type="evidence" value="ECO:0007669"/>
    <property type="project" value="UniProtKB-KW"/>
</dbReference>
<dbReference type="GO" id="GO:0009252">
    <property type="term" value="P:peptidoglycan biosynthetic process"/>
    <property type="evidence" value="ECO:0007669"/>
    <property type="project" value="UniProtKB-UniRule"/>
</dbReference>
<dbReference type="GO" id="GO:0008360">
    <property type="term" value="P:regulation of cell shape"/>
    <property type="evidence" value="ECO:0007669"/>
    <property type="project" value="UniProtKB-KW"/>
</dbReference>
<dbReference type="Gene3D" id="3.90.190.20">
    <property type="entry name" value="Mur ligase, C-terminal domain"/>
    <property type="match status" value="1"/>
</dbReference>
<dbReference type="Gene3D" id="3.40.1190.10">
    <property type="entry name" value="Mur-like, catalytic domain"/>
    <property type="match status" value="1"/>
</dbReference>
<dbReference type="Gene3D" id="3.40.50.720">
    <property type="entry name" value="NAD(P)-binding Rossmann-like Domain"/>
    <property type="match status" value="1"/>
</dbReference>
<dbReference type="HAMAP" id="MF_00639">
    <property type="entry name" value="MurD"/>
    <property type="match status" value="1"/>
</dbReference>
<dbReference type="InterPro" id="IPR036565">
    <property type="entry name" value="Mur-like_cat_sf"/>
</dbReference>
<dbReference type="InterPro" id="IPR004101">
    <property type="entry name" value="Mur_ligase_C"/>
</dbReference>
<dbReference type="InterPro" id="IPR036615">
    <property type="entry name" value="Mur_ligase_C_dom_sf"/>
</dbReference>
<dbReference type="InterPro" id="IPR013221">
    <property type="entry name" value="Mur_ligase_cen"/>
</dbReference>
<dbReference type="InterPro" id="IPR005762">
    <property type="entry name" value="MurD"/>
</dbReference>
<dbReference type="NCBIfam" id="TIGR01087">
    <property type="entry name" value="murD"/>
    <property type="match status" value="1"/>
</dbReference>
<dbReference type="PANTHER" id="PTHR43692">
    <property type="entry name" value="UDP-N-ACETYLMURAMOYLALANINE--D-GLUTAMATE LIGASE"/>
    <property type="match status" value="1"/>
</dbReference>
<dbReference type="PANTHER" id="PTHR43692:SF1">
    <property type="entry name" value="UDP-N-ACETYLMURAMOYLALANINE--D-GLUTAMATE LIGASE"/>
    <property type="match status" value="1"/>
</dbReference>
<dbReference type="Pfam" id="PF02875">
    <property type="entry name" value="Mur_ligase_C"/>
    <property type="match status" value="1"/>
</dbReference>
<dbReference type="Pfam" id="PF08245">
    <property type="entry name" value="Mur_ligase_M"/>
    <property type="match status" value="1"/>
</dbReference>
<dbReference type="Pfam" id="PF21799">
    <property type="entry name" value="MurD-like_N"/>
    <property type="match status" value="1"/>
</dbReference>
<dbReference type="SUPFAM" id="SSF51984">
    <property type="entry name" value="MurCD N-terminal domain"/>
    <property type="match status" value="1"/>
</dbReference>
<dbReference type="SUPFAM" id="SSF53623">
    <property type="entry name" value="MurD-like peptide ligases, catalytic domain"/>
    <property type="match status" value="1"/>
</dbReference>
<dbReference type="SUPFAM" id="SSF53244">
    <property type="entry name" value="MurD-like peptide ligases, peptide-binding domain"/>
    <property type="match status" value="1"/>
</dbReference>
<name>MURD_BACC4</name>
<keyword id="KW-0067">ATP-binding</keyword>
<keyword id="KW-0131">Cell cycle</keyword>
<keyword id="KW-0132">Cell division</keyword>
<keyword id="KW-0133">Cell shape</keyword>
<keyword id="KW-0961">Cell wall biogenesis/degradation</keyword>
<keyword id="KW-0963">Cytoplasm</keyword>
<keyword id="KW-0436">Ligase</keyword>
<keyword id="KW-0547">Nucleotide-binding</keyword>
<keyword id="KW-0573">Peptidoglycan synthesis</keyword>
<sequence length="450" mass="48940">MKTVTEFQNKNILVLGIAKSGYAAATLLQKLGANVIVNDGKPLAENVLAAELQAKGMDVVCGGHPLELLERNISLVVKNPGIPYSNPILVAAKEKQIPIVTEVELAYRISEAPFVGITGSNGKTTTTMLTFEMLKEGQKHPVIAGNIGTVACEVAQDAKENEVVVTELSSFQLMGVELFQPKIAAFLNLFEAHLDYHGTKKEYGLAKANIFKNQTENDYSVINADDADVMALSAYSKGQKILFSTTKEIEDGACIKDNALYFKGEKVVEVSDIVLPGQHNLENILAAMSIAKLLGTSNEAITVVLKRFTGVKHRLEYVTTINNRKFYNDSKATNMLATEKALSAFTQPIVLLAGGLDRGNEFDDLIPYFKNVKAIVTFGQTAPKLVRAAEKAGLDIIESVDTLDEAVVKAYAHSKDGDVVLLSPACASWDQFKTFEERGDIFIQAVHKLI</sequence>
<feature type="chain" id="PRO_1000130826" description="UDP-N-acetylmuramoylalanine--D-glutamate ligase">
    <location>
        <begin position="1"/>
        <end position="450"/>
    </location>
</feature>
<feature type="binding site" evidence="1">
    <location>
        <begin position="119"/>
        <end position="125"/>
    </location>
    <ligand>
        <name>ATP</name>
        <dbReference type="ChEBI" id="CHEBI:30616"/>
    </ligand>
</feature>
<accession>B7H6P8</accession>
<protein>
    <recommendedName>
        <fullName evidence="1">UDP-N-acetylmuramoylalanine--D-glutamate ligase</fullName>
        <ecNumber evidence="1">6.3.2.9</ecNumber>
    </recommendedName>
    <alternativeName>
        <fullName evidence="1">D-glutamic acid-adding enzyme</fullName>
    </alternativeName>
    <alternativeName>
        <fullName evidence="1">UDP-N-acetylmuramoyl-L-alanyl-D-glutamate synthetase</fullName>
    </alternativeName>
</protein>
<comment type="function">
    <text evidence="1">Cell wall formation. Catalyzes the addition of glutamate to the nucleotide precursor UDP-N-acetylmuramoyl-L-alanine (UMA).</text>
</comment>
<comment type="catalytic activity">
    <reaction evidence="1">
        <text>UDP-N-acetyl-alpha-D-muramoyl-L-alanine + D-glutamate + ATP = UDP-N-acetyl-alpha-D-muramoyl-L-alanyl-D-glutamate + ADP + phosphate + H(+)</text>
        <dbReference type="Rhea" id="RHEA:16429"/>
        <dbReference type="ChEBI" id="CHEBI:15378"/>
        <dbReference type="ChEBI" id="CHEBI:29986"/>
        <dbReference type="ChEBI" id="CHEBI:30616"/>
        <dbReference type="ChEBI" id="CHEBI:43474"/>
        <dbReference type="ChEBI" id="CHEBI:83898"/>
        <dbReference type="ChEBI" id="CHEBI:83900"/>
        <dbReference type="ChEBI" id="CHEBI:456216"/>
        <dbReference type="EC" id="6.3.2.9"/>
    </reaction>
</comment>
<comment type="pathway">
    <text evidence="1">Cell wall biogenesis; peptidoglycan biosynthesis.</text>
</comment>
<comment type="subcellular location">
    <subcellularLocation>
        <location evidence="1">Cytoplasm</location>
    </subcellularLocation>
</comment>
<comment type="similarity">
    <text evidence="1">Belongs to the MurCDEF family.</text>
</comment>